<protein>
    <recommendedName>
        <fullName evidence="7">Phospholipase A and acyltransferase 1</fullName>
        <ecNumber evidence="3">2.3.1.-</ecNumber>
        <ecNumber evidence="3">3.1.1.32</ecNumber>
        <ecNumber evidence="3">3.1.1.4</ecNumber>
    </recommendedName>
    <alternativeName>
        <fullName>HRAS-like suppressor 1</fullName>
        <shortName>HRSL1</shortName>
    </alternativeName>
    <alternativeName>
        <fullName>Phospholipid-metabolizing enzyme A-C1</fullName>
    </alternativeName>
    <alternativeName>
        <fullName evidence="6">Rat LRAT-like protein-2</fullName>
        <shortName evidence="6">RLP-2</shortName>
    </alternativeName>
</protein>
<reference evidence="8" key="1">
    <citation type="submission" date="2009-06" db="EMBL/GenBank/DDBJ databases">
        <title>Characterization of A-C1 as an enzyme related to lipid metabolism.</title>
        <authorList>
            <person name="Uyama T."/>
            <person name="Ueda N."/>
        </authorList>
    </citation>
    <scope>NUCLEOTIDE SEQUENCE [MRNA]</scope>
</reference>
<reference key="2">
    <citation type="journal article" date="2004" name="Nature">
        <title>Genome sequence of the Brown Norway rat yields insights into mammalian evolution.</title>
        <authorList>
            <person name="Gibbs R.A."/>
            <person name="Weinstock G.M."/>
            <person name="Metzker M.L."/>
            <person name="Muzny D.M."/>
            <person name="Sodergren E.J."/>
            <person name="Scherer S."/>
            <person name="Scott G."/>
            <person name="Steffen D."/>
            <person name="Worley K.C."/>
            <person name="Burch P.E."/>
            <person name="Okwuonu G."/>
            <person name="Hines S."/>
            <person name="Lewis L."/>
            <person name="Deramo C."/>
            <person name="Delgado O."/>
            <person name="Dugan-Rocha S."/>
            <person name="Miner G."/>
            <person name="Morgan M."/>
            <person name="Hawes A."/>
            <person name="Gill R."/>
            <person name="Holt R.A."/>
            <person name="Adams M.D."/>
            <person name="Amanatides P.G."/>
            <person name="Baden-Tillson H."/>
            <person name="Barnstead M."/>
            <person name="Chin S."/>
            <person name="Evans C.A."/>
            <person name="Ferriera S."/>
            <person name="Fosler C."/>
            <person name="Glodek A."/>
            <person name="Gu Z."/>
            <person name="Jennings D."/>
            <person name="Kraft C.L."/>
            <person name="Nguyen T."/>
            <person name="Pfannkoch C.M."/>
            <person name="Sitter C."/>
            <person name="Sutton G.G."/>
            <person name="Venter J.C."/>
            <person name="Woodage T."/>
            <person name="Smith D."/>
            <person name="Lee H.-M."/>
            <person name="Gustafson E."/>
            <person name="Cahill P."/>
            <person name="Kana A."/>
            <person name="Doucette-Stamm L."/>
            <person name="Weinstock K."/>
            <person name="Fechtel K."/>
            <person name="Weiss R.B."/>
            <person name="Dunn D.M."/>
            <person name="Green E.D."/>
            <person name="Blakesley R.W."/>
            <person name="Bouffard G.G."/>
            <person name="De Jong P.J."/>
            <person name="Osoegawa K."/>
            <person name="Zhu B."/>
            <person name="Marra M."/>
            <person name="Schein J."/>
            <person name="Bosdet I."/>
            <person name="Fjell C."/>
            <person name="Jones S."/>
            <person name="Krzywinski M."/>
            <person name="Mathewson C."/>
            <person name="Siddiqui A."/>
            <person name="Wye N."/>
            <person name="McPherson J."/>
            <person name="Zhao S."/>
            <person name="Fraser C.M."/>
            <person name="Shetty J."/>
            <person name="Shatsman S."/>
            <person name="Geer K."/>
            <person name="Chen Y."/>
            <person name="Abramzon S."/>
            <person name="Nierman W.C."/>
            <person name="Havlak P.H."/>
            <person name="Chen R."/>
            <person name="Durbin K.J."/>
            <person name="Egan A."/>
            <person name="Ren Y."/>
            <person name="Song X.-Z."/>
            <person name="Li B."/>
            <person name="Liu Y."/>
            <person name="Qin X."/>
            <person name="Cawley S."/>
            <person name="Cooney A.J."/>
            <person name="D'Souza L.M."/>
            <person name="Martin K."/>
            <person name="Wu J.Q."/>
            <person name="Gonzalez-Garay M.L."/>
            <person name="Jackson A.R."/>
            <person name="Kalafus K.J."/>
            <person name="McLeod M.P."/>
            <person name="Milosavljevic A."/>
            <person name="Virk D."/>
            <person name="Volkov A."/>
            <person name="Wheeler D.A."/>
            <person name="Zhang Z."/>
            <person name="Bailey J.A."/>
            <person name="Eichler E.E."/>
            <person name="Tuzun E."/>
            <person name="Birney E."/>
            <person name="Mongin E."/>
            <person name="Ureta-Vidal A."/>
            <person name="Woodwark C."/>
            <person name="Zdobnov E."/>
            <person name="Bork P."/>
            <person name="Suyama M."/>
            <person name="Torrents D."/>
            <person name="Alexandersson M."/>
            <person name="Trask B.J."/>
            <person name="Young J.M."/>
            <person name="Huang H."/>
            <person name="Wang H."/>
            <person name="Xing H."/>
            <person name="Daniels S."/>
            <person name="Gietzen D."/>
            <person name="Schmidt J."/>
            <person name="Stevens K."/>
            <person name="Vitt U."/>
            <person name="Wingrove J."/>
            <person name="Camara F."/>
            <person name="Mar Alba M."/>
            <person name="Abril J.F."/>
            <person name="Guigo R."/>
            <person name="Smit A."/>
            <person name="Dubchak I."/>
            <person name="Rubin E.M."/>
            <person name="Couronne O."/>
            <person name="Poliakov A."/>
            <person name="Huebner N."/>
            <person name="Ganten D."/>
            <person name="Goesele C."/>
            <person name="Hummel O."/>
            <person name="Kreitler T."/>
            <person name="Lee Y.-A."/>
            <person name="Monti J."/>
            <person name="Schulz H."/>
            <person name="Zimdahl H."/>
            <person name="Himmelbauer H."/>
            <person name="Lehrach H."/>
            <person name="Jacob H.J."/>
            <person name="Bromberg S."/>
            <person name="Gullings-Handley J."/>
            <person name="Jensen-Seaman M.I."/>
            <person name="Kwitek A.E."/>
            <person name="Lazar J."/>
            <person name="Pasko D."/>
            <person name="Tonellato P.J."/>
            <person name="Twigger S."/>
            <person name="Ponting C.P."/>
            <person name="Duarte J.M."/>
            <person name="Rice S."/>
            <person name="Goodstadt L."/>
            <person name="Beatson S.A."/>
            <person name="Emes R.D."/>
            <person name="Winter E.E."/>
            <person name="Webber C."/>
            <person name="Brandt P."/>
            <person name="Nyakatura G."/>
            <person name="Adetobi M."/>
            <person name="Chiaromonte F."/>
            <person name="Elnitski L."/>
            <person name="Eswara P."/>
            <person name="Hardison R.C."/>
            <person name="Hou M."/>
            <person name="Kolbe D."/>
            <person name="Makova K."/>
            <person name="Miller W."/>
            <person name="Nekrutenko A."/>
            <person name="Riemer C."/>
            <person name="Schwartz S."/>
            <person name="Taylor J."/>
            <person name="Yang S."/>
            <person name="Zhang Y."/>
            <person name="Lindpaintner K."/>
            <person name="Andrews T.D."/>
            <person name="Caccamo M."/>
            <person name="Clamp M."/>
            <person name="Clarke L."/>
            <person name="Curwen V."/>
            <person name="Durbin R.M."/>
            <person name="Eyras E."/>
            <person name="Searle S.M."/>
            <person name="Cooper G.M."/>
            <person name="Batzoglou S."/>
            <person name="Brudno M."/>
            <person name="Sidow A."/>
            <person name="Stone E.A."/>
            <person name="Payseur B.A."/>
            <person name="Bourque G."/>
            <person name="Lopez-Otin C."/>
            <person name="Puente X.S."/>
            <person name="Chakrabarti K."/>
            <person name="Chatterji S."/>
            <person name="Dewey C."/>
            <person name="Pachter L."/>
            <person name="Bray N."/>
            <person name="Yap V.B."/>
            <person name="Caspi A."/>
            <person name="Tesler G."/>
            <person name="Pevzner P.A."/>
            <person name="Haussler D."/>
            <person name="Roskin K.M."/>
            <person name="Baertsch R."/>
            <person name="Clawson H."/>
            <person name="Furey T.S."/>
            <person name="Hinrichs A.S."/>
            <person name="Karolchik D."/>
            <person name="Kent W.J."/>
            <person name="Rosenbloom K.R."/>
            <person name="Trumbower H."/>
            <person name="Weirauch M."/>
            <person name="Cooper D.N."/>
            <person name="Stenson P.D."/>
            <person name="Ma B."/>
            <person name="Brent M."/>
            <person name="Arumugam M."/>
            <person name="Shteynberg D."/>
            <person name="Copley R.R."/>
            <person name="Taylor M.S."/>
            <person name="Riethman H."/>
            <person name="Mudunuri U."/>
            <person name="Peterson J."/>
            <person name="Guyer M."/>
            <person name="Felsenfeld A."/>
            <person name="Old S."/>
            <person name="Mockrin S."/>
            <person name="Collins F.S."/>
        </authorList>
    </citation>
    <scope>NUCLEOTIDE SEQUENCE [LARGE SCALE GENOMIC DNA]</scope>
    <source>
        <strain>Brown Norway</strain>
    </source>
</reference>
<reference key="3">
    <citation type="submission" date="2005-09" db="EMBL/GenBank/DDBJ databases">
        <authorList>
            <person name="Mural R.J."/>
            <person name="Adams M.D."/>
            <person name="Myers E.W."/>
            <person name="Smith H.O."/>
            <person name="Venter J.C."/>
        </authorList>
    </citation>
    <scope>NUCLEOTIDE SEQUENCE [LARGE SCALE GENOMIC DNA]</scope>
</reference>
<reference key="4">
    <citation type="journal article" date="2007" name="J. Biol. Chem.">
        <title>Discovery and characterization of a Ca2+-independent phosphatidylethanolamine N-acyltransferase generating the anandamide precursor and its congeners.</title>
        <authorList>
            <person name="Jin X.H."/>
            <person name="Okamoto Y."/>
            <person name="Morishita J."/>
            <person name="Tsuboi K."/>
            <person name="Tonai T."/>
            <person name="Ueda N."/>
        </authorList>
    </citation>
    <scope>CHARACTERIZATION</scope>
</reference>
<keyword id="KW-0963">Cytoplasm</keyword>
<keyword id="KW-0378">Hydrolase</keyword>
<keyword id="KW-0442">Lipid degradation</keyword>
<keyword id="KW-0443">Lipid metabolism</keyword>
<keyword id="KW-0472">Membrane</keyword>
<keyword id="KW-0539">Nucleus</keyword>
<keyword id="KW-1185">Reference proteome</keyword>
<keyword id="KW-0808">Transferase</keyword>
<keyword id="KW-0812">Transmembrane</keyword>
<keyword id="KW-1133">Transmembrane helix</keyword>
<sequence>MAVNDCFSLTYPHNPHPGDLIEVFRPCYQHWALYLGDGYVINIAPVDGIPSSFSSAKSVFSTKALVKMQLLKDVVGNDTYRINNKYDTTYPPLPVEEVIQRSEFAIGQEVTYDLLVNNCEHFVTLLRYGEGVSEQANRAIGTIGLVAAGIDIFTFLGLFPKRQGAKS</sequence>
<evidence type="ECO:0000250" key="1">
    <source>
        <dbReference type="UniProtKB" id="P53816"/>
    </source>
</evidence>
<evidence type="ECO:0000250" key="2">
    <source>
        <dbReference type="UniProtKB" id="Q9HDD0"/>
    </source>
</evidence>
<evidence type="ECO:0000250" key="3">
    <source>
        <dbReference type="UniProtKB" id="Q9QZU4"/>
    </source>
</evidence>
<evidence type="ECO:0000255" key="4"/>
<evidence type="ECO:0000255" key="5">
    <source>
        <dbReference type="PROSITE-ProRule" id="PRU01283"/>
    </source>
</evidence>
<evidence type="ECO:0000303" key="6">
    <source>
    </source>
</evidence>
<evidence type="ECO:0000305" key="7"/>
<evidence type="ECO:0000312" key="8">
    <source>
        <dbReference type="EMBL" id="BAI63212.1"/>
    </source>
</evidence>
<evidence type="ECO:0000312" key="9">
    <source>
        <dbReference type="EMBL" id="EDL78138.1"/>
    </source>
</evidence>
<evidence type="ECO:0000312" key="10">
    <source>
        <dbReference type="RGD" id="1309485"/>
    </source>
</evidence>
<name>PLAT1_RAT</name>
<feature type="chain" id="PRO_0000450338" description="Phospholipase A and acyltransferase 1">
    <location>
        <begin position="1"/>
        <end position="167"/>
    </location>
</feature>
<feature type="topological domain" description="Cytoplasmic" evidence="4">
    <location>
        <begin position="1"/>
        <end position="138"/>
    </location>
</feature>
<feature type="transmembrane region" description="Helical" evidence="4">
    <location>
        <begin position="139"/>
        <end position="159"/>
    </location>
</feature>
<feature type="topological domain" description="Lumenal" evidence="4">
    <location>
        <begin position="160"/>
        <end position="167"/>
    </location>
</feature>
<feature type="domain" description="LRAT" evidence="5">
    <location>
        <begin position="20"/>
        <end position="135"/>
    </location>
</feature>
<feature type="active site" evidence="1">
    <location>
        <position position="30"/>
    </location>
</feature>
<feature type="active site" description="Acyl-thioester intermediate" evidence="1">
    <location>
        <position position="119"/>
    </location>
</feature>
<comment type="function">
    <text evidence="2 3">Exhibits both phospholipase A1/2 and acyltransferase activities (By similarity). Shows phospholipase A1 (PLA1) and A2 (PLA2) activity, catalyzing the calcium-independent release of fatty acids from the sn-1 or sn-2 position of glycerophospholipids (By similarity). Shows O-acyltransferase activity, catalyzing the transfer of a fatty acyl group from glycerophospholipid to the hydroxyl group of lysophospholipid (By similarity).</text>
</comment>
<comment type="catalytic activity">
    <reaction evidence="3">
        <text>a 1,2-diacyl-sn-glycero-3-phosphocholine + H2O = a 1-acyl-sn-glycero-3-phosphocholine + a fatty acid + H(+)</text>
        <dbReference type="Rhea" id="RHEA:15801"/>
        <dbReference type="ChEBI" id="CHEBI:15377"/>
        <dbReference type="ChEBI" id="CHEBI:15378"/>
        <dbReference type="ChEBI" id="CHEBI:28868"/>
        <dbReference type="ChEBI" id="CHEBI:57643"/>
        <dbReference type="ChEBI" id="CHEBI:58168"/>
        <dbReference type="EC" id="3.1.1.4"/>
    </reaction>
    <physiologicalReaction direction="left-to-right" evidence="2">
        <dbReference type="Rhea" id="RHEA:15802"/>
    </physiologicalReaction>
</comment>
<comment type="catalytic activity">
    <reaction evidence="3">
        <text>a 1,2-diacyl-sn-glycero-3-phosphocholine + H2O = a 2-acyl-sn-glycero-3-phosphocholine + a fatty acid + H(+)</text>
        <dbReference type="Rhea" id="RHEA:18689"/>
        <dbReference type="ChEBI" id="CHEBI:15377"/>
        <dbReference type="ChEBI" id="CHEBI:15378"/>
        <dbReference type="ChEBI" id="CHEBI:28868"/>
        <dbReference type="ChEBI" id="CHEBI:57643"/>
        <dbReference type="ChEBI" id="CHEBI:57875"/>
        <dbReference type="EC" id="3.1.1.32"/>
    </reaction>
    <physiologicalReaction direction="left-to-right" evidence="2">
        <dbReference type="Rhea" id="RHEA:18690"/>
    </physiologicalReaction>
</comment>
<comment type="catalytic activity">
    <reaction evidence="2">
        <text>1,2-dihexadecanoyl-sn-glycero-3-phosphocholine + H2O = 2-hexadecanoyl-sn-glycero-3-phosphocholine + hexadecanoate + H(+)</text>
        <dbReference type="Rhea" id="RHEA:40487"/>
        <dbReference type="ChEBI" id="CHEBI:7896"/>
        <dbReference type="ChEBI" id="CHEBI:15377"/>
        <dbReference type="ChEBI" id="CHEBI:15378"/>
        <dbReference type="ChEBI" id="CHEBI:72999"/>
        <dbReference type="ChEBI" id="CHEBI:76078"/>
    </reaction>
    <physiologicalReaction direction="left-to-right" evidence="2">
        <dbReference type="Rhea" id="RHEA:40488"/>
    </physiologicalReaction>
</comment>
<comment type="catalytic activity">
    <reaction evidence="2">
        <text>1,2-dihexadecanoyl-sn-glycero-3-phosphocholine + H2O = 1-hexadecanoyl-sn-glycero-3-phosphocholine + hexadecanoate + H(+)</text>
        <dbReference type="Rhea" id="RHEA:41223"/>
        <dbReference type="ChEBI" id="CHEBI:7896"/>
        <dbReference type="ChEBI" id="CHEBI:15377"/>
        <dbReference type="ChEBI" id="CHEBI:15378"/>
        <dbReference type="ChEBI" id="CHEBI:72998"/>
        <dbReference type="ChEBI" id="CHEBI:72999"/>
    </reaction>
    <physiologicalReaction direction="left-to-right" evidence="2">
        <dbReference type="Rhea" id="RHEA:41224"/>
    </physiologicalReaction>
</comment>
<comment type="catalytic activity">
    <reaction evidence="2">
        <text>1-hexadecanoyl-2-(5Z,8Z,11Z,14Z-eicosatetraenoyl)-sn-glycero-3-phosphoethanolamine + H2O = 2-(5Z,8Z,11Z,14Z)-eicosatetraenoyl-sn-glycero-3-phosphoethanolamine + hexadecanoate + H(+)</text>
        <dbReference type="Rhea" id="RHEA:41348"/>
        <dbReference type="ChEBI" id="CHEBI:7896"/>
        <dbReference type="ChEBI" id="CHEBI:15377"/>
        <dbReference type="ChEBI" id="CHEBI:15378"/>
        <dbReference type="ChEBI" id="CHEBI:73009"/>
        <dbReference type="ChEBI" id="CHEBI:76091"/>
    </reaction>
    <physiologicalReaction direction="left-to-right" evidence="2">
        <dbReference type="Rhea" id="RHEA:41349"/>
    </physiologicalReaction>
</comment>
<comment type="catalytic activity">
    <reaction evidence="2">
        <text>1-hexadecanoyl-2-(5Z,8Z,11Z,14Z-eicosatetraenoyl)-sn-glycero-3-phosphoethanolamine + H2O = 1-hexadecanoyl-sn-glycero-3-phosphoethanolamine + (5Z,8Z,11Z,14Z)-eicosatetraenoate + H(+)</text>
        <dbReference type="Rhea" id="RHEA:40431"/>
        <dbReference type="ChEBI" id="CHEBI:15377"/>
        <dbReference type="ChEBI" id="CHEBI:15378"/>
        <dbReference type="ChEBI" id="CHEBI:32395"/>
        <dbReference type="ChEBI" id="CHEBI:73004"/>
        <dbReference type="ChEBI" id="CHEBI:73009"/>
    </reaction>
    <physiologicalReaction direction="left-to-right" evidence="2">
        <dbReference type="Rhea" id="RHEA:40432"/>
    </physiologicalReaction>
</comment>
<comment type="catalytic activity">
    <reaction evidence="2">
        <text>1,2-di-(9Z-octadecenoyl)-sn-glycero-3-phosphoethanolamine + 1,2-dihexadecanoyl-sn-glycero-3-phosphocholine = hexadecanoyl-sn-glycero-3-phosphocholine + N-hexadecanoyl-1,2-di-(9Z-octadecenoyl)-sn-glycero-3-phosphoethanolamine + H(+)</text>
        <dbReference type="Rhea" id="RHEA:41360"/>
        <dbReference type="ChEBI" id="CHEBI:15378"/>
        <dbReference type="ChEBI" id="CHEBI:64563"/>
        <dbReference type="ChEBI" id="CHEBI:72999"/>
        <dbReference type="ChEBI" id="CHEBI:74986"/>
        <dbReference type="ChEBI" id="CHEBI:78097"/>
    </reaction>
    <physiologicalReaction direction="left-to-right" evidence="2">
        <dbReference type="Rhea" id="RHEA:41361"/>
    </physiologicalReaction>
</comment>
<comment type="catalytic activity">
    <reaction evidence="2">
        <text>1,2-dihexadecanoyl-sn-glycero-3-phosphocholine + a 2-acyl-sn-glycero-3-phosphocholine = a 1-hexadecanoyl-2-acyl-sn-glycero-3-phosphocholine + 2-hexadecanoyl-sn-glycero-3-phosphocholine</text>
        <dbReference type="Rhea" id="RHEA:41364"/>
        <dbReference type="ChEBI" id="CHEBI:57875"/>
        <dbReference type="ChEBI" id="CHEBI:72999"/>
        <dbReference type="ChEBI" id="CHEBI:76078"/>
        <dbReference type="ChEBI" id="CHEBI:77369"/>
    </reaction>
    <physiologicalReaction direction="left-to-right" evidence="2">
        <dbReference type="Rhea" id="RHEA:41365"/>
    </physiologicalReaction>
</comment>
<comment type="subcellular location">
    <subcellularLocation>
        <location evidence="4">Membrane</location>
        <topology evidence="4">Single-pass membrane protein</topology>
    </subcellularLocation>
    <subcellularLocation>
        <location evidence="3">Cytoplasm</location>
    </subcellularLocation>
    <subcellularLocation>
        <location evidence="3">Nucleus</location>
    </subcellularLocation>
</comment>
<comment type="similarity">
    <text evidence="7">Belongs to the H-rev107 family.</text>
</comment>
<accession>D2KX21</accession>
<dbReference type="EC" id="2.3.1.-" evidence="3"/>
<dbReference type="EC" id="3.1.1.32" evidence="3"/>
<dbReference type="EC" id="3.1.1.4" evidence="3"/>
<dbReference type="EMBL" id="AB510983">
    <property type="protein sequence ID" value="BAI63212.1"/>
    <property type="molecule type" value="mRNA"/>
</dbReference>
<dbReference type="EMBL" id="AABR07034534">
    <property type="status" value="NOT_ANNOTATED_CDS"/>
    <property type="molecule type" value="Genomic_DNA"/>
</dbReference>
<dbReference type="EMBL" id="AABR07034535">
    <property type="status" value="NOT_ANNOTATED_CDS"/>
    <property type="molecule type" value="Genomic_DNA"/>
</dbReference>
<dbReference type="EMBL" id="AABR07034536">
    <property type="status" value="NOT_ANNOTATED_CDS"/>
    <property type="molecule type" value="Genomic_DNA"/>
</dbReference>
<dbReference type="EMBL" id="CH473999">
    <property type="protein sequence ID" value="EDL78138.1"/>
    <property type="molecule type" value="Genomic_DNA"/>
</dbReference>
<dbReference type="EMBL" id="CH473999">
    <property type="protein sequence ID" value="EDL78140.1"/>
    <property type="molecule type" value="Genomic_DNA"/>
</dbReference>
<dbReference type="RefSeq" id="NP_001099341.1">
    <property type="nucleotide sequence ID" value="NM_001105871.2"/>
</dbReference>
<dbReference type="RefSeq" id="XP_006248572.1">
    <property type="nucleotide sequence ID" value="XM_006248510.5"/>
</dbReference>
<dbReference type="SMR" id="D2KX21"/>
<dbReference type="FunCoup" id="D2KX21">
    <property type="interactions" value="19"/>
</dbReference>
<dbReference type="STRING" id="10116.ENSRNOP00000002329"/>
<dbReference type="PhosphoSitePlus" id="D2KX21"/>
<dbReference type="PaxDb" id="10116-ENSRNOP00000002329"/>
<dbReference type="Ensembl" id="ENSRNOT00000002329.4">
    <property type="protein sequence ID" value="ENSRNOP00000002329.3"/>
    <property type="gene ID" value="ENSRNOG00000001711.5"/>
</dbReference>
<dbReference type="GeneID" id="288025"/>
<dbReference type="KEGG" id="rno:288025"/>
<dbReference type="UCSC" id="RGD:1309485">
    <property type="organism name" value="rat"/>
</dbReference>
<dbReference type="AGR" id="RGD:1309485"/>
<dbReference type="CTD" id="57110"/>
<dbReference type="RGD" id="1309485">
    <property type="gene designation" value="Plaat1"/>
</dbReference>
<dbReference type="eggNOG" id="ENOG502QU0S">
    <property type="taxonomic scope" value="Eukaryota"/>
</dbReference>
<dbReference type="GeneTree" id="ENSGT00940000156634"/>
<dbReference type="HOGENOM" id="CLU_109418_0_0_1"/>
<dbReference type="InParanoid" id="D2KX21"/>
<dbReference type="OMA" id="RQRAKYY"/>
<dbReference type="OrthoDB" id="14509at9989"/>
<dbReference type="PhylomeDB" id="D2KX21"/>
<dbReference type="TreeFam" id="TF330836"/>
<dbReference type="Reactome" id="R-RNO-1482839">
    <property type="pathway name" value="Acyl chain remodelling of PE"/>
</dbReference>
<dbReference type="PRO" id="PR:D2KX21"/>
<dbReference type="Proteomes" id="UP000002494">
    <property type="component" value="Chromosome 11"/>
</dbReference>
<dbReference type="Proteomes" id="UP000234681">
    <property type="component" value="Chromosome 11"/>
</dbReference>
<dbReference type="Bgee" id="ENSRNOG00000001711">
    <property type="expression patterns" value="Expressed in quadriceps femoris and 18 other cell types or tissues"/>
</dbReference>
<dbReference type="GO" id="GO:0005737">
    <property type="term" value="C:cytoplasm"/>
    <property type="evidence" value="ECO:0000266"/>
    <property type="project" value="RGD"/>
</dbReference>
<dbReference type="GO" id="GO:0005829">
    <property type="term" value="C:cytosol"/>
    <property type="evidence" value="ECO:0000250"/>
    <property type="project" value="UniProtKB"/>
</dbReference>
<dbReference type="GO" id="GO:0005783">
    <property type="term" value="C:endoplasmic reticulum"/>
    <property type="evidence" value="ECO:0000250"/>
    <property type="project" value="UniProtKB"/>
</dbReference>
<dbReference type="GO" id="GO:0005764">
    <property type="term" value="C:lysosome"/>
    <property type="evidence" value="ECO:0000250"/>
    <property type="project" value="UniProtKB"/>
</dbReference>
<dbReference type="GO" id="GO:0016020">
    <property type="term" value="C:membrane"/>
    <property type="evidence" value="ECO:0007669"/>
    <property type="project" value="UniProtKB-SubCell"/>
</dbReference>
<dbReference type="GO" id="GO:0005739">
    <property type="term" value="C:mitochondrion"/>
    <property type="evidence" value="ECO:0000250"/>
    <property type="project" value="UniProtKB"/>
</dbReference>
<dbReference type="GO" id="GO:0005641">
    <property type="term" value="C:nuclear envelope lumen"/>
    <property type="evidence" value="ECO:0000266"/>
    <property type="project" value="RGD"/>
</dbReference>
<dbReference type="GO" id="GO:0005634">
    <property type="term" value="C:nucleus"/>
    <property type="evidence" value="ECO:0000266"/>
    <property type="project" value="RGD"/>
</dbReference>
<dbReference type="GO" id="GO:0005777">
    <property type="term" value="C:peroxisome"/>
    <property type="evidence" value="ECO:0000266"/>
    <property type="project" value="RGD"/>
</dbReference>
<dbReference type="GO" id="GO:0016410">
    <property type="term" value="F:N-acyltransferase activity"/>
    <property type="evidence" value="ECO:0000266"/>
    <property type="project" value="RGD"/>
</dbReference>
<dbReference type="GO" id="GO:0008374">
    <property type="term" value="F:O-acyltransferase activity"/>
    <property type="evidence" value="ECO:0000266"/>
    <property type="project" value="RGD"/>
</dbReference>
<dbReference type="GO" id="GO:0008970">
    <property type="term" value="F:phospholipase A1 activity"/>
    <property type="evidence" value="ECO:0000266"/>
    <property type="project" value="RGD"/>
</dbReference>
<dbReference type="GO" id="GO:0004623">
    <property type="term" value="F:phospholipase A2 activity"/>
    <property type="evidence" value="ECO:0000266"/>
    <property type="project" value="RGD"/>
</dbReference>
<dbReference type="GO" id="GO:0004620">
    <property type="term" value="F:phospholipase activity"/>
    <property type="evidence" value="ECO:0000314"/>
    <property type="project" value="UniProtKB"/>
</dbReference>
<dbReference type="GO" id="GO:0046485">
    <property type="term" value="P:ether lipid metabolic process"/>
    <property type="evidence" value="ECO:0000266"/>
    <property type="project" value="RGD"/>
</dbReference>
<dbReference type="GO" id="GO:0070306">
    <property type="term" value="P:lens fiber cell differentiation"/>
    <property type="evidence" value="ECO:0000250"/>
    <property type="project" value="UniProtKB"/>
</dbReference>
<dbReference type="GO" id="GO:0016042">
    <property type="term" value="P:lipid catabolic process"/>
    <property type="evidence" value="ECO:0007669"/>
    <property type="project" value="UniProtKB-KW"/>
</dbReference>
<dbReference type="GO" id="GO:0070292">
    <property type="term" value="P:N-acylphosphatidylethanolamine metabolic process"/>
    <property type="evidence" value="ECO:0000266"/>
    <property type="project" value="RGD"/>
</dbReference>
<dbReference type="GO" id="GO:1903008">
    <property type="term" value="P:organelle disassembly"/>
    <property type="evidence" value="ECO:0000250"/>
    <property type="project" value="UniProtKB"/>
</dbReference>
<dbReference type="GO" id="GO:0007031">
    <property type="term" value="P:peroxisome organization"/>
    <property type="evidence" value="ECO:0000266"/>
    <property type="project" value="RGD"/>
</dbReference>
<dbReference type="GO" id="GO:0046470">
    <property type="term" value="P:phosphatidylcholine metabolic process"/>
    <property type="evidence" value="ECO:0000266"/>
    <property type="project" value="RGD"/>
</dbReference>
<dbReference type="FunFam" id="3.90.1720.10:FF:000002">
    <property type="entry name" value="HRAS like suppressor 2"/>
    <property type="match status" value="1"/>
</dbReference>
<dbReference type="Gene3D" id="3.90.1720.10">
    <property type="entry name" value="endopeptidase domain like (from Nostoc punctiforme)"/>
    <property type="match status" value="1"/>
</dbReference>
<dbReference type="InterPro" id="IPR051496">
    <property type="entry name" value="H-rev107_PLA/AT"/>
</dbReference>
<dbReference type="InterPro" id="IPR007053">
    <property type="entry name" value="LRAT_dom"/>
</dbReference>
<dbReference type="PANTHER" id="PTHR13943">
    <property type="entry name" value="HRAS-LIKE SUPPRESSOR - RELATED"/>
    <property type="match status" value="1"/>
</dbReference>
<dbReference type="PANTHER" id="PTHR13943:SF37">
    <property type="entry name" value="PHOSPHOLIPASE A AND ACYLTRANSFERASE 1"/>
    <property type="match status" value="1"/>
</dbReference>
<dbReference type="Pfam" id="PF04970">
    <property type="entry name" value="LRAT"/>
    <property type="match status" value="1"/>
</dbReference>
<dbReference type="PROSITE" id="PS51934">
    <property type="entry name" value="LRAT"/>
    <property type="match status" value="1"/>
</dbReference>
<organism evidence="8">
    <name type="scientific">Rattus norvegicus</name>
    <name type="common">Rat</name>
    <dbReference type="NCBI Taxonomy" id="10116"/>
    <lineage>
        <taxon>Eukaryota</taxon>
        <taxon>Metazoa</taxon>
        <taxon>Chordata</taxon>
        <taxon>Craniata</taxon>
        <taxon>Vertebrata</taxon>
        <taxon>Euteleostomi</taxon>
        <taxon>Mammalia</taxon>
        <taxon>Eutheria</taxon>
        <taxon>Euarchontoglires</taxon>
        <taxon>Glires</taxon>
        <taxon>Rodentia</taxon>
        <taxon>Myomorpha</taxon>
        <taxon>Muroidea</taxon>
        <taxon>Muridae</taxon>
        <taxon>Murinae</taxon>
        <taxon>Rattus</taxon>
    </lineage>
</organism>
<gene>
    <name evidence="10" type="primary">Plaat1</name>
    <name type="synonym">A-C1</name>
    <name evidence="10" type="synonym">Hrasls</name>
    <name type="synonym">Hrasrs</name>
    <name evidence="6" type="synonym">RLP-2</name>
    <name evidence="9" type="ORF">rCG_36537</name>
</gene>
<proteinExistence type="evidence at protein level"/>